<gene>
    <name evidence="1" type="primary">rnfH</name>
    <name type="ordered locus">CbuK_1167</name>
</gene>
<proteinExistence type="inferred from homology"/>
<organism>
    <name type="scientific">Coxiella burnetii (strain CbuK_Q154)</name>
    <name type="common">Coxiella burnetii (strain Q154)</name>
    <dbReference type="NCBI Taxonomy" id="434924"/>
    <lineage>
        <taxon>Bacteria</taxon>
        <taxon>Pseudomonadati</taxon>
        <taxon>Pseudomonadota</taxon>
        <taxon>Gammaproteobacteria</taxon>
        <taxon>Legionellales</taxon>
        <taxon>Coxiellaceae</taxon>
        <taxon>Coxiella</taxon>
    </lineage>
</organism>
<name>RNFH_COXB1</name>
<sequence>MISIIIAYSTPEKQVEIPLTVEESCTLVVAVKRSGILQQFPEINLSQAIVGIHNKRTALDAGLRDGDRIEIYRPLTMDPKQARLLRAKRGKIRRMVRGEAG</sequence>
<reference key="1">
    <citation type="journal article" date="2009" name="Infect. Immun.">
        <title>Comparative genomics reveal extensive transposon-mediated genomic plasticity and diversity among potential effector proteins within the genus Coxiella.</title>
        <authorList>
            <person name="Beare P.A."/>
            <person name="Unsworth N."/>
            <person name="Andoh M."/>
            <person name="Voth D.E."/>
            <person name="Omsland A."/>
            <person name="Gilk S.D."/>
            <person name="Williams K.P."/>
            <person name="Sobral B.W."/>
            <person name="Kupko J.J. III"/>
            <person name="Porcella S.F."/>
            <person name="Samuel J.E."/>
            <person name="Heinzen R.A."/>
        </authorList>
    </citation>
    <scope>NUCLEOTIDE SEQUENCE [LARGE SCALE GENOMIC DNA]</scope>
    <source>
        <strain>CbuK_Q154</strain>
    </source>
</reference>
<protein>
    <recommendedName>
        <fullName evidence="1">Protein RnfH</fullName>
    </recommendedName>
</protein>
<comment type="similarity">
    <text evidence="1">Belongs to the UPF0125 (RnfH) family.</text>
</comment>
<feature type="chain" id="PRO_1000200171" description="Protein RnfH">
    <location>
        <begin position="1"/>
        <end position="101"/>
    </location>
</feature>
<dbReference type="EMBL" id="CP001020">
    <property type="protein sequence ID" value="ACJ20358.1"/>
    <property type="molecule type" value="Genomic_DNA"/>
</dbReference>
<dbReference type="RefSeq" id="WP_005770901.1">
    <property type="nucleotide sequence ID" value="NC_011528.1"/>
</dbReference>
<dbReference type="SMR" id="B6J7V9"/>
<dbReference type="KEGG" id="cbc:CbuK_1167"/>
<dbReference type="HOGENOM" id="CLU_150721_1_0_6"/>
<dbReference type="Gene3D" id="3.10.20.280">
    <property type="entry name" value="RnfH-like"/>
    <property type="match status" value="1"/>
</dbReference>
<dbReference type="HAMAP" id="MF_00460">
    <property type="entry name" value="UPF0125_RnfH"/>
    <property type="match status" value="1"/>
</dbReference>
<dbReference type="InterPro" id="IPR016155">
    <property type="entry name" value="Mopterin_synth/thiamin_S_b"/>
</dbReference>
<dbReference type="InterPro" id="IPR005346">
    <property type="entry name" value="RnfH"/>
</dbReference>
<dbReference type="InterPro" id="IPR037021">
    <property type="entry name" value="RnfH_sf"/>
</dbReference>
<dbReference type="NCBIfam" id="NF002490">
    <property type="entry name" value="PRK01777.1"/>
    <property type="match status" value="1"/>
</dbReference>
<dbReference type="PANTHER" id="PTHR37483">
    <property type="entry name" value="UPF0125 PROTEIN RATB"/>
    <property type="match status" value="1"/>
</dbReference>
<dbReference type="PANTHER" id="PTHR37483:SF1">
    <property type="entry name" value="UPF0125 PROTEIN RATB"/>
    <property type="match status" value="1"/>
</dbReference>
<dbReference type="Pfam" id="PF03658">
    <property type="entry name" value="Ub-RnfH"/>
    <property type="match status" value="1"/>
</dbReference>
<dbReference type="SUPFAM" id="SSF54285">
    <property type="entry name" value="MoaD/ThiS"/>
    <property type="match status" value="1"/>
</dbReference>
<evidence type="ECO:0000255" key="1">
    <source>
        <dbReference type="HAMAP-Rule" id="MF_00460"/>
    </source>
</evidence>
<accession>B6J7V9</accession>